<reference key="1">
    <citation type="journal article" date="1996" name="EMBO J.">
        <title>Complete nucleotide sequence of Saccharomyces cerevisiae chromosome X.</title>
        <authorList>
            <person name="Galibert F."/>
            <person name="Alexandraki D."/>
            <person name="Baur A."/>
            <person name="Boles E."/>
            <person name="Chalwatzis N."/>
            <person name="Chuat J.-C."/>
            <person name="Coster F."/>
            <person name="Cziepluch C."/>
            <person name="de Haan M."/>
            <person name="Domdey H."/>
            <person name="Durand P."/>
            <person name="Entian K.-D."/>
            <person name="Gatius M."/>
            <person name="Goffeau A."/>
            <person name="Grivell L.A."/>
            <person name="Hennemann A."/>
            <person name="Herbert C.J."/>
            <person name="Heumann K."/>
            <person name="Hilger F."/>
            <person name="Hollenberg C.P."/>
            <person name="Huang M.-E."/>
            <person name="Jacq C."/>
            <person name="Jauniaux J.-C."/>
            <person name="Katsoulou C."/>
            <person name="Kirchrath L."/>
            <person name="Kleine K."/>
            <person name="Kordes E."/>
            <person name="Koetter P."/>
            <person name="Liebl S."/>
            <person name="Louis E.J."/>
            <person name="Manus V."/>
            <person name="Mewes H.-W."/>
            <person name="Miosga T."/>
            <person name="Obermaier B."/>
            <person name="Perea J."/>
            <person name="Pohl T.M."/>
            <person name="Portetelle D."/>
            <person name="Pujol A."/>
            <person name="Purnelle B."/>
            <person name="Ramezani Rad M."/>
            <person name="Rasmussen S.W."/>
            <person name="Rose M."/>
            <person name="Rossau R."/>
            <person name="Schaaff-Gerstenschlaeger I."/>
            <person name="Smits P.H.M."/>
            <person name="Scarcez T."/>
            <person name="Soriano N."/>
            <person name="To Van D."/>
            <person name="Tzermia M."/>
            <person name="Van Broekhoven A."/>
            <person name="Vandenbol M."/>
            <person name="Wedler H."/>
            <person name="von Wettstein D."/>
            <person name="Wambutt R."/>
            <person name="Zagulski M."/>
            <person name="Zollner A."/>
            <person name="Karpfinger-Hartl L."/>
        </authorList>
    </citation>
    <scope>NUCLEOTIDE SEQUENCE [LARGE SCALE GENOMIC DNA]</scope>
    <source>
        <strain>ATCC 204508 / S288c</strain>
    </source>
</reference>
<reference key="2">
    <citation type="journal article" date="2014" name="G3 (Bethesda)">
        <title>The reference genome sequence of Saccharomyces cerevisiae: Then and now.</title>
        <authorList>
            <person name="Engel S.R."/>
            <person name="Dietrich F.S."/>
            <person name="Fisk D.G."/>
            <person name="Binkley G."/>
            <person name="Balakrishnan R."/>
            <person name="Costanzo M.C."/>
            <person name="Dwight S.S."/>
            <person name="Hitz B.C."/>
            <person name="Karra K."/>
            <person name="Nash R.S."/>
            <person name="Weng S."/>
            <person name="Wong E.D."/>
            <person name="Lloyd P."/>
            <person name="Skrzypek M.S."/>
            <person name="Miyasato S.R."/>
            <person name="Simison M."/>
            <person name="Cherry J.M."/>
        </authorList>
    </citation>
    <scope>GENOME REANNOTATION</scope>
    <source>
        <strain>ATCC 204508 / S288c</strain>
    </source>
</reference>
<reference key="3">
    <citation type="journal article" date="2007" name="Genome Res.">
        <title>Approaching a complete repository of sequence-verified protein-encoding clones for Saccharomyces cerevisiae.</title>
        <authorList>
            <person name="Hu Y."/>
            <person name="Rolfs A."/>
            <person name="Bhullar B."/>
            <person name="Murthy T.V.S."/>
            <person name="Zhu C."/>
            <person name="Berger M.F."/>
            <person name="Camargo A.A."/>
            <person name="Kelley F."/>
            <person name="McCarron S."/>
            <person name="Jepson D."/>
            <person name="Richardson A."/>
            <person name="Raphael J."/>
            <person name="Moreira D."/>
            <person name="Taycher E."/>
            <person name="Zuo D."/>
            <person name="Mohr S."/>
            <person name="Kane M.F."/>
            <person name="Williamson J."/>
            <person name="Simpson A.J.G."/>
            <person name="Bulyk M.L."/>
            <person name="Harlow E."/>
            <person name="Marsischky G."/>
            <person name="Kolodner R.D."/>
            <person name="LaBaer J."/>
        </authorList>
    </citation>
    <scope>NUCLEOTIDE SEQUENCE [GENOMIC DNA]</scope>
    <source>
        <strain>ATCC 204508 / S288c</strain>
    </source>
</reference>
<reference key="4">
    <citation type="journal article" date="2003" name="Mol. Cell">
        <title>Assigning function to yeast proteins by integration of technologies.</title>
        <authorList>
            <person name="Hazbun T.R."/>
            <person name="Malmstroem L."/>
            <person name="Anderson S."/>
            <person name="Graczyk B.J."/>
            <person name="Fox B."/>
            <person name="Riffle M."/>
            <person name="Sundin B.A."/>
            <person name="Aranda J.D."/>
            <person name="McDonald W.H."/>
            <person name="Chiu C.-H."/>
            <person name="Snydsman B.E."/>
            <person name="Bradley P."/>
            <person name="Muller E.G.D."/>
            <person name="Fields S."/>
            <person name="Baker D."/>
            <person name="Yates J.R. III"/>
            <person name="Davis T.N."/>
        </authorList>
    </citation>
    <scope>IDENTIFICATION BY MASS SPECTROMETRY</scope>
</reference>
<reference key="5">
    <citation type="journal article" date="2003" name="Nature">
        <title>Global analysis of protein expression in yeast.</title>
        <authorList>
            <person name="Ghaemmaghami S."/>
            <person name="Huh W.-K."/>
            <person name="Bower K."/>
            <person name="Howson R.W."/>
            <person name="Belle A."/>
            <person name="Dephoure N."/>
            <person name="O'Shea E.K."/>
            <person name="Weissman J.S."/>
        </authorList>
    </citation>
    <scope>LEVEL OF PROTEIN EXPRESSION [LARGE SCALE ANALYSIS]</scope>
</reference>
<reference key="6">
    <citation type="journal article" date="2009" name="Science">
        <title>Global analysis of Cdk1 substrate phosphorylation sites provides insights into evolution.</title>
        <authorList>
            <person name="Holt L.J."/>
            <person name="Tuch B.B."/>
            <person name="Villen J."/>
            <person name="Johnson A.D."/>
            <person name="Gygi S.P."/>
            <person name="Morgan D.O."/>
        </authorList>
    </citation>
    <scope>PHOSPHORYLATION [LARGE SCALE ANALYSIS] AT SER-101</scope>
    <scope>IDENTIFICATION BY MASS SPECTROMETRY [LARGE SCALE ANALYSIS]</scope>
</reference>
<reference key="7">
    <citation type="journal article" date="2018" name="Nat. Genet.">
        <title>Highly parallel genome variant engineering with CRISPR-Cas9.</title>
        <authorList>
            <person name="Sadhu M.J."/>
            <person name="Bloom J.S."/>
            <person name="Day L."/>
            <person name="Siegel J.J."/>
            <person name="Kosuri S."/>
            <person name="Kruglyak L."/>
        </authorList>
    </citation>
    <scope>IDENTIFICATION OF PROBABLE INITIATOR METHIONINE</scope>
</reference>
<protein>
    <recommendedName>
        <fullName evidence="4">Uncharacterized protein YJR012C</fullName>
    </recommendedName>
</protein>
<accession>P47087</accession>
<accession>D6VWI8</accession>
<name>YJY2_YEAST</name>
<evidence type="ECO:0000256" key="1">
    <source>
        <dbReference type="SAM" id="MobiDB-lite"/>
    </source>
</evidence>
<evidence type="ECO:0000269" key="2">
    <source>
    </source>
</evidence>
<evidence type="ECO:0000269" key="3">
    <source>
    </source>
</evidence>
<evidence type="ECO:0000305" key="4"/>
<evidence type="ECO:0000312" key="5">
    <source>
        <dbReference type="SGD" id="S000003773"/>
    </source>
</evidence>
<evidence type="ECO:0007744" key="6">
    <source>
    </source>
</evidence>
<organism>
    <name type="scientific">Saccharomyces cerevisiae (strain ATCC 204508 / S288c)</name>
    <name type="common">Baker's yeast</name>
    <dbReference type="NCBI Taxonomy" id="559292"/>
    <lineage>
        <taxon>Eukaryota</taxon>
        <taxon>Fungi</taxon>
        <taxon>Dikarya</taxon>
        <taxon>Ascomycota</taxon>
        <taxon>Saccharomycotina</taxon>
        <taxon>Saccharomycetes</taxon>
        <taxon>Saccharomycetales</taxon>
        <taxon>Saccharomycetaceae</taxon>
        <taxon>Saccharomyces</taxon>
    </lineage>
</organism>
<feature type="chain" id="PRO_0000203083" description="Uncharacterized protein YJR012C">
    <location>
        <begin position="1"/>
        <end position="132"/>
    </location>
</feature>
<feature type="region of interest" description="Disordered" evidence="1">
    <location>
        <begin position="36"/>
        <end position="69"/>
    </location>
</feature>
<feature type="region of interest" description="Disordered" evidence="1">
    <location>
        <begin position="97"/>
        <end position="132"/>
    </location>
</feature>
<feature type="modified residue" description="Phosphoserine" evidence="6">
    <location>
        <position position="101"/>
    </location>
</feature>
<dbReference type="EMBL" id="X87611">
    <property type="protein sequence ID" value="CAA60934.1"/>
    <property type="status" value="ALT_INIT"/>
    <property type="molecule type" value="Genomic_DNA"/>
</dbReference>
<dbReference type="EMBL" id="Z49512">
    <property type="protein sequence ID" value="CAA89536.1"/>
    <property type="status" value="ALT_INIT"/>
    <property type="molecule type" value="Genomic_DNA"/>
</dbReference>
<dbReference type="EMBL" id="AY557900">
    <property type="protein sequence ID" value="AAS56226.1"/>
    <property type="status" value="ALT_INIT"/>
    <property type="molecule type" value="Genomic_DNA"/>
</dbReference>
<dbReference type="EMBL" id="BK006943">
    <property type="protein sequence ID" value="DAA08804.2"/>
    <property type="molecule type" value="Genomic_DNA"/>
</dbReference>
<dbReference type="PIR" id="S55200">
    <property type="entry name" value="S55200"/>
</dbReference>
<dbReference type="RefSeq" id="NP_012546.4">
    <property type="nucleotide sequence ID" value="NM_001181670.4"/>
</dbReference>
<dbReference type="BioGRID" id="300661">
    <property type="interactions" value="9"/>
</dbReference>
<dbReference type="DIP" id="DIP-5042N"/>
<dbReference type="FunCoup" id="P47087">
    <property type="interactions" value="24"/>
</dbReference>
<dbReference type="IntAct" id="P47087">
    <property type="interactions" value="5"/>
</dbReference>
<dbReference type="MINT" id="P47087"/>
<dbReference type="STRING" id="4932.YJR012C"/>
<dbReference type="GlyGen" id="P47087">
    <property type="glycosylation" value="1 site"/>
</dbReference>
<dbReference type="iPTMnet" id="P47087"/>
<dbReference type="PaxDb" id="4932-YJR012C"/>
<dbReference type="PeptideAtlas" id="P47087"/>
<dbReference type="EnsemblFungi" id="YJR012C_mRNA">
    <property type="protein sequence ID" value="YJR012C"/>
    <property type="gene ID" value="YJR012C"/>
</dbReference>
<dbReference type="GeneID" id="853469"/>
<dbReference type="KEGG" id="sce:YJR012C"/>
<dbReference type="AGR" id="SGD:S000003773"/>
<dbReference type="SGD" id="S000003773">
    <property type="gene designation" value="YJR012C"/>
</dbReference>
<dbReference type="VEuPathDB" id="FungiDB:YJR012C"/>
<dbReference type="eggNOG" id="ENOG502SBU0">
    <property type="taxonomic scope" value="Eukaryota"/>
</dbReference>
<dbReference type="HOGENOM" id="CLU_1327052_0_0_1"/>
<dbReference type="InParanoid" id="P47087"/>
<dbReference type="OrthoDB" id="9936937at2759"/>
<dbReference type="BioCyc" id="YEAST:G3O-31657-MONOMER"/>
<dbReference type="BioGRID-ORCS" id="853469">
    <property type="hits" value="1 hit in 10 CRISPR screens"/>
</dbReference>
<dbReference type="PRO" id="PR:P47087"/>
<dbReference type="Proteomes" id="UP000002311">
    <property type="component" value="Chromosome X"/>
</dbReference>
<dbReference type="RNAct" id="P47087">
    <property type="molecule type" value="protein"/>
</dbReference>
<dbReference type="InterPro" id="IPR040554">
    <property type="entry name" value="KPWE_PEX14_dom"/>
</dbReference>
<dbReference type="Pfam" id="PF17733">
    <property type="entry name" value="KPWE_dom"/>
    <property type="match status" value="1"/>
</dbReference>
<gene>
    <name evidence="5" type="ordered locus">YJR012C</name>
    <name type="ORF">J1440</name>
    <name type="ORF">YJR83.25</name>
</gene>
<proteinExistence type="evidence at protein level"/>
<comment type="subunit">
    <text evidence="3">Copurifies with proteins HOL1, MMP1, PEX7 and PLB1.</text>
</comment>
<comment type="miscellaneous">
    <text evidence="2">Present with 538 molecules/cell in log phase SD medium.</text>
</comment>
<comment type="sequence caution" evidence="4">
    <conflict type="erroneous initiation">
        <sequence resource="EMBL-CDS" id="AAS56226"/>
    </conflict>
    <text>Extended N-terminus.</text>
</comment>
<comment type="sequence caution" evidence="4">
    <conflict type="erroneous initiation">
        <sequence resource="EMBL-CDS" id="CAA60934"/>
    </conflict>
    <text>Extended N-terminus.</text>
</comment>
<comment type="sequence caution" evidence="4">
    <conflict type="erroneous initiation">
        <sequence resource="EMBL-CDS" id="CAA89536"/>
    </conflict>
    <text>Extended N-terminus.</text>
</comment>
<sequence>MAAGGELSYEELLDHILNNKPIPNIVEVPNVTLDEGLASTPSLRPRPRPWEGQLQHQSHQGSLDKPNISLDIDQESLEGMTSLTRLSECYDIQSKLQINDSDNDNDDNNNDNNKGDGNDDDNNTVTANPTAR</sequence>
<keyword id="KW-0597">Phosphoprotein</keyword>
<keyword id="KW-1185">Reference proteome</keyword>